<dbReference type="EMBL" id="X95898">
    <property type="protein sequence ID" value="CAA65141.1"/>
    <property type="molecule type" value="Genomic_DNA"/>
</dbReference>
<dbReference type="EMBL" id="D86179">
    <property type="protein sequence ID" value="BAA19985.1"/>
    <property type="molecule type" value="Genomic_DNA"/>
</dbReference>
<dbReference type="PIR" id="S55557">
    <property type="entry name" value="S55557"/>
</dbReference>
<dbReference type="RefSeq" id="WP_006617276.1">
    <property type="nucleotide sequence ID" value="NZ_JBEVAD010000032.1"/>
</dbReference>
<dbReference type="PDB" id="1ALL">
    <property type="method" value="X-ray"/>
    <property type="resolution" value="2.30 A"/>
    <property type="chains" value="A=2-161"/>
</dbReference>
<dbReference type="PDBsum" id="1ALL"/>
<dbReference type="SMR" id="P72504"/>
<dbReference type="MINT" id="P72504"/>
<dbReference type="iPTMnet" id="P72504"/>
<dbReference type="OMA" id="GGQLFQK"/>
<dbReference type="EvolutionaryTrace" id="P72504"/>
<dbReference type="GO" id="GO:0030089">
    <property type="term" value="C:phycobilisome"/>
    <property type="evidence" value="ECO:0007669"/>
    <property type="project" value="UniProtKB-KW"/>
</dbReference>
<dbReference type="GO" id="GO:0031676">
    <property type="term" value="C:plasma membrane-derived thylakoid membrane"/>
    <property type="evidence" value="ECO:0007669"/>
    <property type="project" value="UniProtKB-SubCell"/>
</dbReference>
<dbReference type="GO" id="GO:0015979">
    <property type="term" value="P:photosynthesis"/>
    <property type="evidence" value="ECO:0007669"/>
    <property type="project" value="UniProtKB-KW"/>
</dbReference>
<dbReference type="CDD" id="cd12125">
    <property type="entry name" value="APC_alpha"/>
    <property type="match status" value="1"/>
</dbReference>
<dbReference type="Gene3D" id="1.10.490.20">
    <property type="entry name" value="Phycocyanins"/>
    <property type="match status" value="1"/>
</dbReference>
<dbReference type="InterPro" id="IPR009050">
    <property type="entry name" value="Globin-like_sf"/>
</dbReference>
<dbReference type="InterPro" id="IPR012128">
    <property type="entry name" value="Phycobilisome_asu/bsu"/>
</dbReference>
<dbReference type="InterPro" id="IPR038719">
    <property type="entry name" value="Phycobilisome_asu/bsu_sf"/>
</dbReference>
<dbReference type="PANTHER" id="PTHR34011:SF2">
    <property type="entry name" value="ALLOPHYCOCYANIN ALPHA CHAIN"/>
    <property type="match status" value="1"/>
</dbReference>
<dbReference type="PANTHER" id="PTHR34011">
    <property type="entry name" value="PHYCOBILISOME 32.1 KDA LINKER POLYPEPTIDE, PHYCOCYANIN-ASSOCIATED, ROD 2-RELATED"/>
    <property type="match status" value="1"/>
</dbReference>
<dbReference type="Pfam" id="PF00502">
    <property type="entry name" value="Phycobilisome"/>
    <property type="match status" value="1"/>
</dbReference>
<dbReference type="PIRSF" id="PIRSF000081">
    <property type="entry name" value="Phycocyanin"/>
    <property type="match status" value="1"/>
</dbReference>
<dbReference type="SUPFAM" id="SSF46458">
    <property type="entry name" value="Globin-like"/>
    <property type="match status" value="1"/>
</dbReference>
<accession>P72504</accession>
<accession>O08136</accession>
<organism>
    <name type="scientific">Arthrospira platensis</name>
    <name type="common">Spirulina platensis</name>
    <dbReference type="NCBI Taxonomy" id="118562"/>
    <lineage>
        <taxon>Bacteria</taxon>
        <taxon>Bacillati</taxon>
        <taxon>Cyanobacteriota</taxon>
        <taxon>Cyanophyceae</taxon>
        <taxon>Oscillatoriophycideae</taxon>
        <taxon>Oscillatoriales</taxon>
        <taxon>Microcoleaceae</taxon>
        <taxon>Arthrospira</taxon>
    </lineage>
</organism>
<name>PHAA_ARTPT</name>
<sequence>MSIVTKSIVNADAEARYLSPGELDRIKSFVTSGERRVRIAETMTGARERIIKEAGNQLFQKRPDVVSPGGNAYGEEMTATCLRDLDYYLRLITYGIVAGDVTPIEEIGVVGVREMYKSLGTPIEAVAEGVRAMKSVATSLLSGEDAAEAGAYFDYLIGAMS</sequence>
<protein>
    <recommendedName>
        <fullName>Allophycocyanin alpha chain</fullName>
    </recommendedName>
</protein>
<reference key="1">
    <citation type="submission" date="1996-09" db="EMBL/GenBank/DDBJ databases">
        <title>Organization and nucleotide sequence of the a, b and c subunits of allophycocyanin genes from Spirulina platensis.</title>
        <authorList>
            <person name="Meesapyodsuk D."/>
            <person name="Chetkul W."/>
            <person name="Nomsasawai P."/>
            <person name="Anjard C."/>
            <person name="Tanticharoen M."/>
            <person name="Chevadhanarak S."/>
        </authorList>
    </citation>
    <scope>NUCLEOTIDE SEQUENCE [GENOMIC DNA]</scope>
    <source>
        <strain>Italy</strain>
    </source>
</reference>
<reference key="2">
    <citation type="submission" date="1997-05" db="EMBL/GenBank/DDBJ databases">
        <title>Cloning and sequencing of the allophycocyanin genes from cyanobacterium Spirulina platensis.</title>
        <authorList>
            <person name="Qin S."/>
            <person name="Kawata Y."/>
            <person name="Yano S."/>
            <person name="Tseng C."/>
            <person name="Kojima H."/>
        </authorList>
    </citation>
    <scope>NUCLEOTIDE SEQUENCE [GENOMIC DNA]</scope>
    <source>
        <strain>F3</strain>
    </source>
</reference>
<reference key="3">
    <citation type="journal article" date="1995" name="J. Mol. Biol.">
        <title>Isolation, crystallization, crystal structure analysis and refinement of allophycocyanin from the cyanobacterium Spirulina platensis at 2.3 A resolution.</title>
        <authorList>
            <person name="Brejc K."/>
            <person name="Ficner R."/>
            <person name="Huber R."/>
            <person name="Steinbacher S."/>
        </authorList>
    </citation>
    <scope>PROTEIN SEQUENCE OF 2-47</scope>
    <scope>X-RAY CRYSTALLOGRAPHY (2.3 ANGSTROMS)</scope>
    <scope>METHYLATION AT ASN-71</scope>
</reference>
<keyword id="KW-0002">3D-structure</keyword>
<keyword id="KW-0042">Antenna complex</keyword>
<keyword id="KW-0089">Bile pigment</keyword>
<keyword id="KW-0157">Chromophore</keyword>
<keyword id="KW-0903">Direct protein sequencing</keyword>
<keyword id="KW-0249">Electron transport</keyword>
<keyword id="KW-0472">Membrane</keyword>
<keyword id="KW-0488">Methylation</keyword>
<keyword id="KW-0602">Photosynthesis</keyword>
<keyword id="KW-0605">Phycobilisome</keyword>
<keyword id="KW-0793">Thylakoid</keyword>
<keyword id="KW-0813">Transport</keyword>
<proteinExistence type="evidence at protein level"/>
<comment type="function">
    <text>Light-harvesting photosynthetic bile pigment-protein from the phycobiliprotein complex. Allophycocyanin has a maximum absorption at approximately 650 nanometers.</text>
</comment>
<comment type="subunit">
    <text>Component of the phycobilisome. Heterodimer of an alpha and a beta chain.</text>
</comment>
<comment type="subcellular location">
    <subcellularLocation>
        <location>Cellular thylakoid membrane</location>
        <topology>Peripheral membrane protein</topology>
        <orientation>Cytoplasmic side</orientation>
    </subcellularLocation>
    <text>Forms the core of the phycobilisome.</text>
</comment>
<comment type="PTM">
    <text>Contains one covalently linked phycocyanobilin chromophore.</text>
</comment>
<comment type="similarity">
    <text evidence="2">Belongs to the phycobiliprotein family.</text>
</comment>
<feature type="initiator methionine" description="Removed" evidence="1">
    <location>
        <position position="1"/>
    </location>
</feature>
<feature type="chain" id="PRO_0000199074" description="Allophycocyanin alpha chain">
    <location>
        <begin position="2"/>
        <end position="161"/>
    </location>
</feature>
<feature type="binding site" description="covalent">
    <location>
        <position position="81"/>
    </location>
    <ligand>
        <name>(2R,3E)-phycocyanobilin</name>
        <dbReference type="ChEBI" id="CHEBI:85275"/>
    </ligand>
</feature>
<feature type="modified residue" description="N4-methylasparagine" evidence="1">
    <location>
        <position position="71"/>
    </location>
</feature>
<feature type="helix" evidence="3">
    <location>
        <begin position="3"/>
        <end position="13"/>
    </location>
</feature>
<feature type="helix" evidence="3">
    <location>
        <begin position="20"/>
        <end position="31"/>
    </location>
</feature>
<feature type="helix" evidence="3">
    <location>
        <begin position="33"/>
        <end position="45"/>
    </location>
</feature>
<feature type="helix" evidence="3">
    <location>
        <begin position="47"/>
        <end position="61"/>
    </location>
</feature>
<feature type="helix" evidence="3">
    <location>
        <begin position="63"/>
        <end position="65"/>
    </location>
</feature>
<feature type="helix" evidence="3">
    <location>
        <begin position="75"/>
        <end position="98"/>
    </location>
</feature>
<feature type="helix" evidence="3">
    <location>
        <begin position="102"/>
        <end position="108"/>
    </location>
</feature>
<feature type="turn" evidence="3">
    <location>
        <begin position="109"/>
        <end position="111"/>
    </location>
</feature>
<feature type="helix" evidence="3">
    <location>
        <begin position="112"/>
        <end position="119"/>
    </location>
</feature>
<feature type="helix" evidence="3">
    <location>
        <begin position="123"/>
        <end position="138"/>
    </location>
</feature>
<feature type="helix" evidence="3">
    <location>
        <begin position="143"/>
        <end position="160"/>
    </location>
</feature>
<gene>
    <name type="primary">apcA</name>
</gene>
<evidence type="ECO:0000269" key="1">
    <source>
    </source>
</evidence>
<evidence type="ECO:0000305" key="2"/>
<evidence type="ECO:0007829" key="3">
    <source>
        <dbReference type="PDB" id="1ALL"/>
    </source>
</evidence>